<comment type="function">
    <text evidence="1">Provides the (R)-glutamate required for cell wall biosynthesis.</text>
</comment>
<comment type="catalytic activity">
    <reaction evidence="1">
        <text>L-glutamate = D-glutamate</text>
        <dbReference type="Rhea" id="RHEA:12813"/>
        <dbReference type="ChEBI" id="CHEBI:29985"/>
        <dbReference type="ChEBI" id="CHEBI:29986"/>
        <dbReference type="EC" id="5.1.1.3"/>
    </reaction>
</comment>
<comment type="pathway">
    <text evidence="1">Cell wall biogenesis; peptidoglycan biosynthesis.</text>
</comment>
<comment type="similarity">
    <text evidence="1">Belongs to the aspartate/glutamate racemases family.</text>
</comment>
<dbReference type="EC" id="5.1.1.3" evidence="1"/>
<dbReference type="EMBL" id="CP000687">
    <property type="protein sequence ID" value="ABY70430.1"/>
    <property type="molecule type" value="Genomic_DNA"/>
</dbReference>
<dbReference type="RefSeq" id="WP_005606458.1">
    <property type="nucleotide sequence ID" value="NC_010278.1"/>
</dbReference>
<dbReference type="SMR" id="B0BT16"/>
<dbReference type="KEGG" id="apj:APJL_1880"/>
<dbReference type="HOGENOM" id="CLU_052344_2_0_6"/>
<dbReference type="UniPathway" id="UPA00219"/>
<dbReference type="Proteomes" id="UP000008547">
    <property type="component" value="Chromosome"/>
</dbReference>
<dbReference type="GO" id="GO:0008881">
    <property type="term" value="F:glutamate racemase activity"/>
    <property type="evidence" value="ECO:0007669"/>
    <property type="project" value="UniProtKB-UniRule"/>
</dbReference>
<dbReference type="GO" id="GO:0071555">
    <property type="term" value="P:cell wall organization"/>
    <property type="evidence" value="ECO:0007669"/>
    <property type="project" value="UniProtKB-KW"/>
</dbReference>
<dbReference type="GO" id="GO:0009252">
    <property type="term" value="P:peptidoglycan biosynthetic process"/>
    <property type="evidence" value="ECO:0007669"/>
    <property type="project" value="UniProtKB-UniRule"/>
</dbReference>
<dbReference type="GO" id="GO:0008360">
    <property type="term" value="P:regulation of cell shape"/>
    <property type="evidence" value="ECO:0007669"/>
    <property type="project" value="UniProtKB-KW"/>
</dbReference>
<dbReference type="FunFam" id="3.40.50.1860:FF:000001">
    <property type="entry name" value="Glutamate racemase"/>
    <property type="match status" value="1"/>
</dbReference>
<dbReference type="Gene3D" id="3.40.50.1860">
    <property type="match status" value="2"/>
</dbReference>
<dbReference type="HAMAP" id="MF_00258">
    <property type="entry name" value="Glu_racemase"/>
    <property type="match status" value="1"/>
</dbReference>
<dbReference type="InterPro" id="IPR015942">
    <property type="entry name" value="Asp/Glu/hydantoin_racemase"/>
</dbReference>
<dbReference type="InterPro" id="IPR001920">
    <property type="entry name" value="Asp/Glu_race"/>
</dbReference>
<dbReference type="InterPro" id="IPR018187">
    <property type="entry name" value="Asp/Glu_racemase_AS_1"/>
</dbReference>
<dbReference type="InterPro" id="IPR033134">
    <property type="entry name" value="Asp/Glu_racemase_AS_2"/>
</dbReference>
<dbReference type="InterPro" id="IPR004391">
    <property type="entry name" value="Glu_race"/>
</dbReference>
<dbReference type="NCBIfam" id="TIGR00067">
    <property type="entry name" value="glut_race"/>
    <property type="match status" value="1"/>
</dbReference>
<dbReference type="PANTHER" id="PTHR21198">
    <property type="entry name" value="GLUTAMATE RACEMASE"/>
    <property type="match status" value="1"/>
</dbReference>
<dbReference type="PANTHER" id="PTHR21198:SF2">
    <property type="entry name" value="GLUTAMATE RACEMASE"/>
    <property type="match status" value="1"/>
</dbReference>
<dbReference type="Pfam" id="PF01177">
    <property type="entry name" value="Asp_Glu_race"/>
    <property type="match status" value="1"/>
</dbReference>
<dbReference type="SUPFAM" id="SSF53681">
    <property type="entry name" value="Aspartate/glutamate racemase"/>
    <property type="match status" value="2"/>
</dbReference>
<dbReference type="PROSITE" id="PS00923">
    <property type="entry name" value="ASP_GLU_RACEMASE_1"/>
    <property type="match status" value="1"/>
</dbReference>
<dbReference type="PROSITE" id="PS00924">
    <property type="entry name" value="ASP_GLU_RACEMASE_2"/>
    <property type="match status" value="1"/>
</dbReference>
<name>MURI_ACTPJ</name>
<gene>
    <name evidence="1" type="primary">murI</name>
    <name type="ordered locus">APJL_1880</name>
</gene>
<keyword id="KW-0133">Cell shape</keyword>
<keyword id="KW-0961">Cell wall biogenesis/degradation</keyword>
<keyword id="KW-0413">Isomerase</keyword>
<keyword id="KW-0573">Peptidoglycan synthesis</keyword>
<accession>B0BT16</accession>
<sequence>MKPTILLYDSGMGGLTIYDAIRQTLPNAHYLYCFDNAYFPYSERSENVLIEQAVKIVQKIAEKYPLDMVVVACNTASTVVLPALREKFAFPIVGTVPAIKPAAAISQTKTIGLLATKGTVERPYVAELIEKYAKDCIVEKIGTTTLVELVEEKIRTGQVDQERLIEVIAEWQTHPTLDTVILGCTHFPLVKQELQQLLPNVKYFIDPGNGIANRVSALLSESVPEEPEQNKENIAFCTKIDEEFFKREVIMQQWGFKRLELLNFL</sequence>
<feature type="chain" id="PRO_1000114031" description="Glutamate racemase">
    <location>
        <begin position="1"/>
        <end position="265"/>
    </location>
</feature>
<feature type="active site" description="Proton donor/acceptor" evidence="1">
    <location>
        <position position="73"/>
    </location>
</feature>
<feature type="active site" description="Proton donor/acceptor" evidence="1">
    <location>
        <position position="184"/>
    </location>
</feature>
<feature type="binding site" evidence="1">
    <location>
        <begin position="9"/>
        <end position="10"/>
    </location>
    <ligand>
        <name>substrate</name>
    </ligand>
</feature>
<feature type="binding site" evidence="1">
    <location>
        <begin position="41"/>
        <end position="42"/>
    </location>
    <ligand>
        <name>substrate</name>
    </ligand>
</feature>
<feature type="binding site" evidence="1">
    <location>
        <begin position="74"/>
        <end position="75"/>
    </location>
    <ligand>
        <name>substrate</name>
    </ligand>
</feature>
<feature type="binding site" evidence="1">
    <location>
        <begin position="185"/>
        <end position="186"/>
    </location>
    <ligand>
        <name>substrate</name>
    </ligand>
</feature>
<reference key="1">
    <citation type="journal article" date="2008" name="PLoS ONE">
        <title>Genome biology of Actinobacillus pleuropneumoniae JL03, an isolate of serotype 3 prevalent in China.</title>
        <authorList>
            <person name="Xu Z."/>
            <person name="Zhou Y."/>
            <person name="Li L."/>
            <person name="Zhou R."/>
            <person name="Xiao S."/>
            <person name="Wan Y."/>
            <person name="Zhang S."/>
            <person name="Wang K."/>
            <person name="Li W."/>
            <person name="Li L."/>
            <person name="Jin H."/>
            <person name="Kang M."/>
            <person name="Dalai B."/>
            <person name="Li T."/>
            <person name="Liu L."/>
            <person name="Cheng Y."/>
            <person name="Zhang L."/>
            <person name="Xu T."/>
            <person name="Zheng H."/>
            <person name="Pu S."/>
            <person name="Wang B."/>
            <person name="Gu W."/>
            <person name="Zhang X.L."/>
            <person name="Zhu G.-F."/>
            <person name="Wang S."/>
            <person name="Zhao G.-P."/>
            <person name="Chen H."/>
        </authorList>
    </citation>
    <scope>NUCLEOTIDE SEQUENCE [LARGE SCALE GENOMIC DNA]</scope>
    <source>
        <strain>JL03</strain>
    </source>
</reference>
<evidence type="ECO:0000255" key="1">
    <source>
        <dbReference type="HAMAP-Rule" id="MF_00258"/>
    </source>
</evidence>
<proteinExistence type="inferred from homology"/>
<protein>
    <recommendedName>
        <fullName evidence="1">Glutamate racemase</fullName>
        <ecNumber evidence="1">5.1.1.3</ecNumber>
    </recommendedName>
</protein>
<organism>
    <name type="scientific">Actinobacillus pleuropneumoniae serotype 3 (strain JL03)</name>
    <dbReference type="NCBI Taxonomy" id="434271"/>
    <lineage>
        <taxon>Bacteria</taxon>
        <taxon>Pseudomonadati</taxon>
        <taxon>Pseudomonadota</taxon>
        <taxon>Gammaproteobacteria</taxon>
        <taxon>Pasteurellales</taxon>
        <taxon>Pasteurellaceae</taxon>
        <taxon>Actinobacillus</taxon>
    </lineage>
</organism>